<accession>Q57853</accession>
<organism>
    <name type="scientific">Methanocaldococcus jannaschii (strain ATCC 43067 / DSM 2661 / JAL-1 / JCM 10045 / NBRC 100440)</name>
    <name type="common">Methanococcus jannaschii</name>
    <dbReference type="NCBI Taxonomy" id="243232"/>
    <lineage>
        <taxon>Archaea</taxon>
        <taxon>Methanobacteriati</taxon>
        <taxon>Methanobacteriota</taxon>
        <taxon>Methanomada group</taxon>
        <taxon>Methanococci</taxon>
        <taxon>Methanococcales</taxon>
        <taxon>Methanocaldococcaceae</taxon>
        <taxon>Methanocaldococcus</taxon>
    </lineage>
</organism>
<name>Y410_METJA</name>
<evidence type="ECO:0000255" key="1"/>
<dbReference type="EMBL" id="L77117">
    <property type="protein sequence ID" value="AAB98399.1"/>
    <property type="molecule type" value="Genomic_DNA"/>
</dbReference>
<dbReference type="PIR" id="B64351">
    <property type="entry name" value="B64351"/>
</dbReference>
<dbReference type="RefSeq" id="WP_010869909.1">
    <property type="nucleotide sequence ID" value="NC_000909.1"/>
</dbReference>
<dbReference type="SMR" id="Q57853"/>
<dbReference type="STRING" id="243232.MJ_0410"/>
<dbReference type="PaxDb" id="243232-MJ_0410"/>
<dbReference type="EnsemblBacteria" id="AAB98399">
    <property type="protein sequence ID" value="AAB98399"/>
    <property type="gene ID" value="MJ_0410"/>
</dbReference>
<dbReference type="GeneID" id="1451270"/>
<dbReference type="KEGG" id="mja:MJ_0410"/>
<dbReference type="eggNOG" id="arCOG00589">
    <property type="taxonomic scope" value="Archaea"/>
</dbReference>
<dbReference type="HOGENOM" id="CLU_037612_0_3_2"/>
<dbReference type="InParanoid" id="Q57853"/>
<dbReference type="OrthoDB" id="31168at2157"/>
<dbReference type="PhylomeDB" id="Q57853"/>
<dbReference type="Proteomes" id="UP000000805">
    <property type="component" value="Chromosome"/>
</dbReference>
<dbReference type="GO" id="GO:0009898">
    <property type="term" value="C:cytoplasmic side of plasma membrane"/>
    <property type="evidence" value="ECO:0000318"/>
    <property type="project" value="GO_Central"/>
</dbReference>
<dbReference type="GO" id="GO:0005829">
    <property type="term" value="C:cytosol"/>
    <property type="evidence" value="ECO:0000318"/>
    <property type="project" value="GO_Central"/>
</dbReference>
<dbReference type="GO" id="GO:0005524">
    <property type="term" value="F:ATP binding"/>
    <property type="evidence" value="ECO:0000318"/>
    <property type="project" value="GO_Central"/>
</dbReference>
<dbReference type="GO" id="GO:0016887">
    <property type="term" value="F:ATP hydrolysis activity"/>
    <property type="evidence" value="ECO:0000318"/>
    <property type="project" value="GO_Central"/>
</dbReference>
<dbReference type="Gene3D" id="3.40.50.300">
    <property type="entry name" value="P-loop containing nucleotide triphosphate hydrolases"/>
    <property type="match status" value="1"/>
</dbReference>
<dbReference type="InterPro" id="IPR025669">
    <property type="entry name" value="AAA_dom"/>
</dbReference>
<dbReference type="InterPro" id="IPR027417">
    <property type="entry name" value="P-loop_NTPase"/>
</dbReference>
<dbReference type="InterPro" id="IPR050625">
    <property type="entry name" value="ParA/MinD_ATPase"/>
</dbReference>
<dbReference type="PANTHER" id="PTHR43384:SF10">
    <property type="entry name" value="ATPASE INVOLVED IN CHROMOSOME PARTITIONING, PARA_MIND FAMILY"/>
    <property type="match status" value="1"/>
</dbReference>
<dbReference type="PANTHER" id="PTHR43384">
    <property type="entry name" value="SEPTUM SITE-DETERMINING PROTEIN MIND HOMOLOG, CHLOROPLASTIC-RELATED"/>
    <property type="match status" value="1"/>
</dbReference>
<dbReference type="Pfam" id="PF13614">
    <property type="entry name" value="AAA_31"/>
    <property type="match status" value="1"/>
</dbReference>
<dbReference type="SUPFAM" id="SSF52540">
    <property type="entry name" value="P-loop containing nucleoside triphosphate hydrolases"/>
    <property type="match status" value="1"/>
</dbReference>
<gene>
    <name type="ordered locus">MJ0410</name>
</gene>
<sequence>MKIGFYNIQGGTGKTTVAANFAYILSQSVKTILIDCDIYGGTTAVLFGLEDKEHNLNTYLAGDSAIEDIIYHYDDLAIIHTDVSSKVFGYKSDLNRFETLVKELEEEYDVIIYDFPPNITEDNPLIGYVGEFELVNKVVVVGEDSIPSIVNSLKTIELITDLGIGLTGIIVNKYRGLTDISEIIDDVIGVLPYDQNVERQWVESTPIVKIKTKFTKEMTALANEIASIYLEKDLASLRALRLAKAISELTEVEKSEKDFEDYLE</sequence>
<proteinExistence type="predicted"/>
<protein>
    <recommendedName>
        <fullName>Uncharacterized ATP-binding protein MJ0410</fullName>
    </recommendedName>
</protein>
<feature type="chain" id="PRO_0000106859" description="Uncharacterized ATP-binding protein MJ0410">
    <location>
        <begin position="1"/>
        <end position="264"/>
    </location>
</feature>
<feature type="binding site" evidence="1">
    <location>
        <begin position="8"/>
        <end position="15"/>
    </location>
    <ligand>
        <name>ATP</name>
        <dbReference type="ChEBI" id="CHEBI:30616"/>
    </ligand>
</feature>
<keyword id="KW-0067">ATP-binding</keyword>
<keyword id="KW-0547">Nucleotide-binding</keyword>
<keyword id="KW-1185">Reference proteome</keyword>
<reference key="1">
    <citation type="journal article" date="1996" name="Science">
        <title>Complete genome sequence of the methanogenic archaeon, Methanococcus jannaschii.</title>
        <authorList>
            <person name="Bult C.J."/>
            <person name="White O."/>
            <person name="Olsen G.J."/>
            <person name="Zhou L."/>
            <person name="Fleischmann R.D."/>
            <person name="Sutton G.G."/>
            <person name="Blake J.A."/>
            <person name="FitzGerald L.M."/>
            <person name="Clayton R.A."/>
            <person name="Gocayne J.D."/>
            <person name="Kerlavage A.R."/>
            <person name="Dougherty B.A."/>
            <person name="Tomb J.-F."/>
            <person name="Adams M.D."/>
            <person name="Reich C.I."/>
            <person name="Overbeek R."/>
            <person name="Kirkness E.F."/>
            <person name="Weinstock K.G."/>
            <person name="Merrick J.M."/>
            <person name="Glodek A."/>
            <person name="Scott J.L."/>
            <person name="Geoghagen N.S.M."/>
            <person name="Weidman J.F."/>
            <person name="Fuhrmann J.L."/>
            <person name="Nguyen D."/>
            <person name="Utterback T.R."/>
            <person name="Kelley J.M."/>
            <person name="Peterson J.D."/>
            <person name="Sadow P.W."/>
            <person name="Hanna M.C."/>
            <person name="Cotton M.D."/>
            <person name="Roberts K.M."/>
            <person name="Hurst M.A."/>
            <person name="Kaine B.P."/>
            <person name="Borodovsky M."/>
            <person name="Klenk H.-P."/>
            <person name="Fraser C.M."/>
            <person name="Smith H.O."/>
            <person name="Woese C.R."/>
            <person name="Venter J.C."/>
        </authorList>
    </citation>
    <scope>NUCLEOTIDE SEQUENCE [LARGE SCALE GENOMIC DNA]</scope>
    <source>
        <strain>ATCC 43067 / DSM 2661 / JAL-1 / JCM 10045 / NBRC 100440</strain>
    </source>
</reference>